<keyword id="KW-0378">Hydrolase</keyword>
<keyword id="KW-0460">Magnesium</keyword>
<keyword id="KW-0479">Metal-binding</keyword>
<keyword id="KW-0704">Schiff base</keyword>
<dbReference type="EC" id="3.11.1.1" evidence="1"/>
<dbReference type="EMBL" id="BA000038">
    <property type="protein sequence ID" value="BAC96500.1"/>
    <property type="status" value="ALT_INIT"/>
    <property type="molecule type" value="Genomic_DNA"/>
</dbReference>
<dbReference type="RefSeq" id="WP_011082503.1">
    <property type="nucleotide sequence ID" value="NC_005140.1"/>
</dbReference>
<dbReference type="SMR" id="Q7MF46"/>
<dbReference type="STRING" id="672.VV93_v1c34550"/>
<dbReference type="KEGG" id="vvy:VVA0474"/>
<dbReference type="PATRIC" id="fig|196600.6.peg.3677"/>
<dbReference type="eggNOG" id="COG0637">
    <property type="taxonomic scope" value="Bacteria"/>
</dbReference>
<dbReference type="HOGENOM" id="CLU_045011_12_0_6"/>
<dbReference type="Proteomes" id="UP000002675">
    <property type="component" value="Chromosome II"/>
</dbReference>
<dbReference type="GO" id="GO:0005829">
    <property type="term" value="C:cytosol"/>
    <property type="evidence" value="ECO:0007669"/>
    <property type="project" value="TreeGrafter"/>
</dbReference>
<dbReference type="GO" id="GO:0000287">
    <property type="term" value="F:magnesium ion binding"/>
    <property type="evidence" value="ECO:0007669"/>
    <property type="project" value="UniProtKB-UniRule"/>
</dbReference>
<dbReference type="GO" id="GO:0008967">
    <property type="term" value="F:phosphoglycolate phosphatase activity"/>
    <property type="evidence" value="ECO:0007669"/>
    <property type="project" value="TreeGrafter"/>
</dbReference>
<dbReference type="GO" id="GO:0050194">
    <property type="term" value="F:phosphonoacetaldehyde hydrolase activity"/>
    <property type="evidence" value="ECO:0007669"/>
    <property type="project" value="UniProtKB-UniRule"/>
</dbReference>
<dbReference type="GO" id="GO:0006281">
    <property type="term" value="P:DNA repair"/>
    <property type="evidence" value="ECO:0007669"/>
    <property type="project" value="TreeGrafter"/>
</dbReference>
<dbReference type="GO" id="GO:0019700">
    <property type="term" value="P:organic phosphonate catabolic process"/>
    <property type="evidence" value="ECO:0007669"/>
    <property type="project" value="InterPro"/>
</dbReference>
<dbReference type="CDD" id="cd02586">
    <property type="entry name" value="HAD_PHN"/>
    <property type="match status" value="1"/>
</dbReference>
<dbReference type="FunFam" id="1.10.150.240:FF:000006">
    <property type="entry name" value="Phosphonoacetaldehyde hydrolase"/>
    <property type="match status" value="1"/>
</dbReference>
<dbReference type="Gene3D" id="3.40.50.1000">
    <property type="entry name" value="HAD superfamily/HAD-like"/>
    <property type="match status" value="1"/>
</dbReference>
<dbReference type="Gene3D" id="1.10.150.240">
    <property type="entry name" value="Putative phosphatase, domain 2"/>
    <property type="match status" value="1"/>
</dbReference>
<dbReference type="HAMAP" id="MF_01375">
    <property type="entry name" value="PhnX"/>
    <property type="match status" value="1"/>
</dbReference>
<dbReference type="InterPro" id="IPR050155">
    <property type="entry name" value="HAD-like_hydrolase_sf"/>
</dbReference>
<dbReference type="InterPro" id="IPR036412">
    <property type="entry name" value="HAD-like_sf"/>
</dbReference>
<dbReference type="InterPro" id="IPR006439">
    <property type="entry name" value="HAD-SF_hydro_IA"/>
</dbReference>
<dbReference type="InterPro" id="IPR023214">
    <property type="entry name" value="HAD_sf"/>
</dbReference>
<dbReference type="InterPro" id="IPR023198">
    <property type="entry name" value="PGP-like_dom2"/>
</dbReference>
<dbReference type="InterPro" id="IPR006323">
    <property type="entry name" value="Phosphonoacetald_hydro"/>
</dbReference>
<dbReference type="NCBIfam" id="TIGR01509">
    <property type="entry name" value="HAD-SF-IA-v3"/>
    <property type="match status" value="1"/>
</dbReference>
<dbReference type="NCBIfam" id="TIGR01422">
    <property type="entry name" value="phosphonatase"/>
    <property type="match status" value="1"/>
</dbReference>
<dbReference type="PANTHER" id="PTHR43434">
    <property type="entry name" value="PHOSPHOGLYCOLATE PHOSPHATASE"/>
    <property type="match status" value="1"/>
</dbReference>
<dbReference type="PANTHER" id="PTHR43434:SF19">
    <property type="entry name" value="PHOSPHONOACETALDEHYDE HYDROLASE"/>
    <property type="match status" value="1"/>
</dbReference>
<dbReference type="Pfam" id="PF00702">
    <property type="entry name" value="Hydrolase"/>
    <property type="match status" value="1"/>
</dbReference>
<dbReference type="SFLD" id="SFLDS00003">
    <property type="entry name" value="Haloacid_Dehalogenase"/>
    <property type="match status" value="1"/>
</dbReference>
<dbReference type="SFLD" id="SFLDF00038">
    <property type="entry name" value="phosphonoacetaldehyde_hydrolas"/>
    <property type="match status" value="1"/>
</dbReference>
<dbReference type="SUPFAM" id="SSF56784">
    <property type="entry name" value="HAD-like"/>
    <property type="match status" value="1"/>
</dbReference>
<gene>
    <name evidence="1" type="primary">phnX</name>
    <name type="ordered locus">VVA0474</name>
</gene>
<evidence type="ECO:0000255" key="1">
    <source>
        <dbReference type="HAMAP-Rule" id="MF_01375"/>
    </source>
</evidence>
<evidence type="ECO:0000305" key="2"/>
<sequence>MNKSPIQAVIFDWAGTIVDFGSFAPTSIFVEAFKQGFDFEIDLEEAREPMGLGKWDHIQAVGRIPAVDKRWNEKFGRSMISEDIDAIYAAFMPLQKAKVADHAEPILNAIEVVNGLKDKGIKIGSCSGYPREVMDVLIPVAADYGYQPDYVVATDDLPQGGRPAPFMALKNVIELGVSDVKACVKVDDSAPGIFEGHNAGMWTVGLLLSGNEAGLTFEEYQAADEATLEKAREKARAKLLKSSPHYLIDTIADFPEVVADIERRLAAGERP</sequence>
<accession>Q7MF46</accession>
<name>PHNX_VIBVY</name>
<proteinExistence type="inferred from homology"/>
<comment type="function">
    <text evidence="1">Involved in phosphonate degradation.</text>
</comment>
<comment type="catalytic activity">
    <reaction evidence="1">
        <text>phosphonoacetaldehyde + H2O = acetaldehyde + phosphate + H(+)</text>
        <dbReference type="Rhea" id="RHEA:18905"/>
        <dbReference type="ChEBI" id="CHEBI:15343"/>
        <dbReference type="ChEBI" id="CHEBI:15377"/>
        <dbReference type="ChEBI" id="CHEBI:15378"/>
        <dbReference type="ChEBI" id="CHEBI:43474"/>
        <dbReference type="ChEBI" id="CHEBI:58383"/>
        <dbReference type="EC" id="3.11.1.1"/>
    </reaction>
</comment>
<comment type="cofactor">
    <cofactor evidence="1">
        <name>Mg(2+)</name>
        <dbReference type="ChEBI" id="CHEBI:18420"/>
    </cofactor>
    <text evidence="1">Binds 1 Mg(2+) ion per subunit.</text>
</comment>
<comment type="subunit">
    <text evidence="1">Homodimer.</text>
</comment>
<comment type="similarity">
    <text evidence="1">Belongs to the HAD-like hydrolase superfamily. PhnX family.</text>
</comment>
<comment type="sequence caution" evidence="2">
    <conflict type="erroneous initiation">
        <sequence resource="EMBL-CDS" id="BAC96500"/>
    </conflict>
</comment>
<reference key="1">
    <citation type="journal article" date="2003" name="Genome Res.">
        <title>Comparative genome analysis of Vibrio vulnificus, a marine pathogen.</title>
        <authorList>
            <person name="Chen C.-Y."/>
            <person name="Wu K.-M."/>
            <person name="Chang Y.-C."/>
            <person name="Chang C.-H."/>
            <person name="Tsai H.-C."/>
            <person name="Liao T.-L."/>
            <person name="Liu Y.-M."/>
            <person name="Chen H.-J."/>
            <person name="Shen A.B.-T."/>
            <person name="Li J.-C."/>
            <person name="Su T.-L."/>
            <person name="Shao C.-P."/>
            <person name="Lee C.-T."/>
            <person name="Hor L.-I."/>
            <person name="Tsai S.-F."/>
        </authorList>
    </citation>
    <scope>NUCLEOTIDE SEQUENCE [LARGE SCALE GENOMIC DNA]</scope>
    <source>
        <strain>YJ016</strain>
    </source>
</reference>
<protein>
    <recommendedName>
        <fullName evidence="1">Phosphonoacetaldehyde hydrolase</fullName>
        <shortName evidence="1">Phosphonatase</shortName>
        <ecNumber evidence="1">3.11.1.1</ecNumber>
    </recommendedName>
    <alternativeName>
        <fullName evidence="1">Phosphonoacetaldehyde phosphonohydrolase</fullName>
    </alternativeName>
</protein>
<organism>
    <name type="scientific">Vibrio vulnificus (strain YJ016)</name>
    <dbReference type="NCBI Taxonomy" id="196600"/>
    <lineage>
        <taxon>Bacteria</taxon>
        <taxon>Pseudomonadati</taxon>
        <taxon>Pseudomonadota</taxon>
        <taxon>Gammaproteobacteria</taxon>
        <taxon>Vibrionales</taxon>
        <taxon>Vibrionaceae</taxon>
        <taxon>Vibrio</taxon>
    </lineage>
</organism>
<feature type="chain" id="PRO_0000284606" description="Phosphonoacetaldehyde hydrolase">
    <location>
        <begin position="1"/>
        <end position="271"/>
    </location>
</feature>
<feature type="active site" description="Nucleophile" evidence="1">
    <location>
        <position position="12"/>
    </location>
</feature>
<feature type="active site" description="Schiff-base intermediate with substrate" evidence="1">
    <location>
        <position position="54"/>
    </location>
</feature>
<feature type="binding site" evidence="1">
    <location>
        <position position="12"/>
    </location>
    <ligand>
        <name>Mg(2+)</name>
        <dbReference type="ChEBI" id="CHEBI:18420"/>
    </ligand>
</feature>
<feature type="binding site" evidence="1">
    <location>
        <position position="14"/>
    </location>
    <ligand>
        <name>Mg(2+)</name>
        <dbReference type="ChEBI" id="CHEBI:18420"/>
    </ligand>
</feature>
<feature type="binding site" evidence="1">
    <location>
        <position position="188"/>
    </location>
    <ligand>
        <name>Mg(2+)</name>
        <dbReference type="ChEBI" id="CHEBI:18420"/>
    </ligand>
</feature>